<keyword id="KW-0093">Biotin biosynthesis</keyword>
<keyword id="KW-0963">Cytoplasm</keyword>
<keyword id="KW-0378">Hydrolase</keyword>
<keyword id="KW-0719">Serine esterase</keyword>
<feature type="chain" id="PRO_1000140009" description="Pimeloyl-[acyl-carrier protein] methyl ester esterase">
    <location>
        <begin position="1"/>
        <end position="253"/>
    </location>
</feature>
<feature type="active site" description="Nucleophile" evidence="1">
    <location>
        <position position="78"/>
    </location>
</feature>
<feature type="active site" evidence="1">
    <location>
        <position position="203"/>
    </location>
</feature>
<feature type="active site" evidence="1">
    <location>
        <position position="231"/>
    </location>
</feature>
<feature type="binding site" evidence="1">
    <location>
        <position position="18"/>
    </location>
    <ligand>
        <name>substrate</name>
    </ligand>
</feature>
<feature type="binding site" evidence="1">
    <location>
        <begin position="78"/>
        <end position="79"/>
    </location>
    <ligand>
        <name>substrate</name>
    </ligand>
</feature>
<feature type="binding site" evidence="1">
    <location>
        <begin position="139"/>
        <end position="143"/>
    </location>
    <ligand>
        <name>substrate</name>
    </ligand>
</feature>
<feature type="binding site" evidence="1">
    <location>
        <position position="231"/>
    </location>
    <ligand>
        <name>substrate</name>
    </ligand>
</feature>
<name>BIOH_XANCB</name>
<dbReference type="EC" id="3.1.1.85" evidence="1"/>
<dbReference type="EMBL" id="AM920689">
    <property type="protein sequence ID" value="CAP49744.1"/>
    <property type="molecule type" value="Genomic_DNA"/>
</dbReference>
<dbReference type="SMR" id="B0RMQ9"/>
<dbReference type="ESTHER" id="xanca-BIOH">
    <property type="family name" value="BioH"/>
</dbReference>
<dbReference type="KEGG" id="xca:xcc-b100_0413"/>
<dbReference type="HOGENOM" id="CLU_020336_12_2_6"/>
<dbReference type="UniPathway" id="UPA00078"/>
<dbReference type="Proteomes" id="UP000001188">
    <property type="component" value="Chromosome"/>
</dbReference>
<dbReference type="GO" id="GO:0005737">
    <property type="term" value="C:cytoplasm"/>
    <property type="evidence" value="ECO:0007669"/>
    <property type="project" value="UniProtKB-SubCell"/>
</dbReference>
<dbReference type="GO" id="GO:0016020">
    <property type="term" value="C:membrane"/>
    <property type="evidence" value="ECO:0007669"/>
    <property type="project" value="TreeGrafter"/>
</dbReference>
<dbReference type="GO" id="GO:0090499">
    <property type="term" value="F:pimelyl-[acyl-carrier protein] methyl ester esterase activity"/>
    <property type="evidence" value="ECO:0007669"/>
    <property type="project" value="UniProtKB-EC"/>
</dbReference>
<dbReference type="GO" id="GO:0009102">
    <property type="term" value="P:biotin biosynthetic process"/>
    <property type="evidence" value="ECO:0007669"/>
    <property type="project" value="UniProtKB-UniRule"/>
</dbReference>
<dbReference type="Gene3D" id="3.40.50.1820">
    <property type="entry name" value="alpha/beta hydrolase"/>
    <property type="match status" value="1"/>
</dbReference>
<dbReference type="HAMAP" id="MF_01260">
    <property type="entry name" value="Carboxylester"/>
    <property type="match status" value="1"/>
</dbReference>
<dbReference type="InterPro" id="IPR000073">
    <property type="entry name" value="AB_hydrolase_1"/>
</dbReference>
<dbReference type="InterPro" id="IPR029058">
    <property type="entry name" value="AB_hydrolase_fold"/>
</dbReference>
<dbReference type="InterPro" id="IPR050266">
    <property type="entry name" value="AB_hydrolase_sf"/>
</dbReference>
<dbReference type="InterPro" id="IPR010076">
    <property type="entry name" value="BioH"/>
</dbReference>
<dbReference type="NCBIfam" id="TIGR01738">
    <property type="entry name" value="bioH"/>
    <property type="match status" value="1"/>
</dbReference>
<dbReference type="PANTHER" id="PTHR43798:SF31">
    <property type="entry name" value="AB HYDROLASE SUPERFAMILY PROTEIN YCLE"/>
    <property type="match status" value="1"/>
</dbReference>
<dbReference type="PANTHER" id="PTHR43798">
    <property type="entry name" value="MONOACYLGLYCEROL LIPASE"/>
    <property type="match status" value="1"/>
</dbReference>
<dbReference type="Pfam" id="PF00561">
    <property type="entry name" value="Abhydrolase_1"/>
    <property type="match status" value="1"/>
</dbReference>
<dbReference type="SUPFAM" id="SSF53474">
    <property type="entry name" value="alpha/beta-Hydrolases"/>
    <property type="match status" value="1"/>
</dbReference>
<sequence>MHIDVIGHGPALVLLHGWALHGGVFAPLVERLAPHYQLHLVDLPGHGFSHDDTTPLALPHVVAAIAAATPAAVWVGWSLGGLFALHAAATQPQVRALAMIAATPRFVRGSDWPDAVEREVFVQFGQDLARDYRGTLDRFLALDTLGSAHARSELRSLRETLTARGEPAASALQDGLGLLERTDLRRALATLARPSLWIAGQRDRLVPAAGMHAAAARAPHAQALTIDGGGHAPFLGHADQVAEALHRFVAALP</sequence>
<organism>
    <name type="scientific">Xanthomonas campestris pv. campestris (strain B100)</name>
    <dbReference type="NCBI Taxonomy" id="509169"/>
    <lineage>
        <taxon>Bacteria</taxon>
        <taxon>Pseudomonadati</taxon>
        <taxon>Pseudomonadota</taxon>
        <taxon>Gammaproteobacteria</taxon>
        <taxon>Lysobacterales</taxon>
        <taxon>Lysobacteraceae</taxon>
        <taxon>Xanthomonas</taxon>
    </lineage>
</organism>
<gene>
    <name evidence="1" type="primary">bioH</name>
    <name type="ordered locus">xcc-b100_0413</name>
</gene>
<comment type="function">
    <text evidence="1">The physiological role of BioH is to remove the methyl group introduced by BioC when the pimeloyl moiety is complete. It allows to synthesize pimeloyl-ACP via the fatty acid synthetic pathway through the hydrolysis of the ester bonds of pimeloyl-ACP esters.</text>
</comment>
<comment type="catalytic activity">
    <reaction evidence="1">
        <text>6-carboxyhexanoyl-[ACP] methyl ester + H2O = 6-carboxyhexanoyl-[ACP] + methanol + H(+)</text>
        <dbReference type="Rhea" id="RHEA:42700"/>
        <dbReference type="Rhea" id="RHEA-COMP:9955"/>
        <dbReference type="Rhea" id="RHEA-COMP:10186"/>
        <dbReference type="ChEBI" id="CHEBI:15377"/>
        <dbReference type="ChEBI" id="CHEBI:15378"/>
        <dbReference type="ChEBI" id="CHEBI:17790"/>
        <dbReference type="ChEBI" id="CHEBI:78846"/>
        <dbReference type="ChEBI" id="CHEBI:82735"/>
        <dbReference type="EC" id="3.1.1.85"/>
    </reaction>
</comment>
<comment type="pathway">
    <text evidence="1">Cofactor biosynthesis; biotin biosynthesis.</text>
</comment>
<comment type="subunit">
    <text evidence="1">Monomer.</text>
</comment>
<comment type="subcellular location">
    <subcellularLocation>
        <location evidence="1">Cytoplasm</location>
    </subcellularLocation>
</comment>
<comment type="similarity">
    <text evidence="1">Belongs to the AB hydrolase superfamily. Carboxylesterase BioH family.</text>
</comment>
<proteinExistence type="inferred from homology"/>
<accession>B0RMQ9</accession>
<reference key="1">
    <citation type="journal article" date="2008" name="J. Biotechnol.">
        <title>The genome of Xanthomonas campestris pv. campestris B100 and its use for the reconstruction of metabolic pathways involved in xanthan biosynthesis.</title>
        <authorList>
            <person name="Vorhoelter F.-J."/>
            <person name="Schneiker S."/>
            <person name="Goesmann A."/>
            <person name="Krause L."/>
            <person name="Bekel T."/>
            <person name="Kaiser O."/>
            <person name="Linke B."/>
            <person name="Patschkowski T."/>
            <person name="Rueckert C."/>
            <person name="Schmid J."/>
            <person name="Sidhu V.K."/>
            <person name="Sieber V."/>
            <person name="Tauch A."/>
            <person name="Watt S.A."/>
            <person name="Weisshaar B."/>
            <person name="Becker A."/>
            <person name="Niehaus K."/>
            <person name="Puehler A."/>
        </authorList>
    </citation>
    <scope>NUCLEOTIDE SEQUENCE [LARGE SCALE GENOMIC DNA]</scope>
    <source>
        <strain>B100</strain>
    </source>
</reference>
<protein>
    <recommendedName>
        <fullName evidence="1">Pimeloyl-[acyl-carrier protein] methyl ester esterase</fullName>
        <ecNumber evidence="1">3.1.1.85</ecNumber>
    </recommendedName>
    <alternativeName>
        <fullName evidence="1">Biotin synthesis protein BioH</fullName>
    </alternativeName>
    <alternativeName>
        <fullName evidence="1">Carboxylesterase BioH</fullName>
    </alternativeName>
</protein>
<evidence type="ECO:0000255" key="1">
    <source>
        <dbReference type="HAMAP-Rule" id="MF_01260"/>
    </source>
</evidence>